<geneLocation type="plasmid"/>
<comment type="function">
    <text evidence="1">Simultaneously catalyzes two reactions, namely formation of ethylene and of succinate from 2-oxoglutarate.</text>
</comment>
<comment type="catalytic activity">
    <reaction>
        <text>2-oxoglutarate + O2 + 2 H(+) = ethene + 3 CO2 + H2O</text>
        <dbReference type="Rhea" id="RHEA:31523"/>
        <dbReference type="ChEBI" id="CHEBI:15377"/>
        <dbReference type="ChEBI" id="CHEBI:15378"/>
        <dbReference type="ChEBI" id="CHEBI:15379"/>
        <dbReference type="ChEBI" id="CHEBI:16526"/>
        <dbReference type="ChEBI" id="CHEBI:16810"/>
        <dbReference type="ChEBI" id="CHEBI:18153"/>
        <dbReference type="EC" id="1.13.12.19"/>
    </reaction>
</comment>
<comment type="catalytic activity">
    <reaction>
        <text>L-arginine + 2-oxoglutarate + O2 = guanidine + L-glutamate 5-semialdehyde + succinate + CO2</text>
        <dbReference type="Rhea" id="RHEA:31535"/>
        <dbReference type="ChEBI" id="CHEBI:15379"/>
        <dbReference type="ChEBI" id="CHEBI:16526"/>
        <dbReference type="ChEBI" id="CHEBI:16810"/>
        <dbReference type="ChEBI" id="CHEBI:30031"/>
        <dbReference type="ChEBI" id="CHEBI:30087"/>
        <dbReference type="ChEBI" id="CHEBI:32682"/>
        <dbReference type="ChEBI" id="CHEBI:58066"/>
        <dbReference type="EC" id="1.14.20.7"/>
    </reaction>
</comment>
<comment type="cofactor">
    <cofactor evidence="1">
        <name>Fe(2+)</name>
        <dbReference type="ChEBI" id="CHEBI:29033"/>
    </cofactor>
</comment>
<comment type="pathway">
    <text>Alkene biosynthesis; ethylene biosynthesis via 2-oxoglutarate.</text>
</comment>
<comment type="subunit">
    <text evidence="1">Monomer.</text>
</comment>
<comment type="miscellaneous">
    <text>A dual-circuit mechanism has been proposed in P.syringae pv phaseolicola for the complete reaction, in which the binding of L-arginine and 2-oxoglutarate in a Schiff-base structure generates a common intermediate for the two reactions.</text>
</comment>
<comment type="miscellaneous">
    <text evidence="4">Encoded on an unnamed plasmid.</text>
</comment>
<comment type="similarity">
    <text evidence="3">Belongs to the iron/ascorbate-dependent oxidoreductase family.</text>
</comment>
<accession>Q7BS31</accession>
<proteinExistence type="inferred from homology"/>
<dbReference type="EC" id="1.13.12.19"/>
<dbReference type="EC" id="1.14.20.7"/>
<dbReference type="EMBL" id="AF101059">
    <property type="protein sequence ID" value="AAD16441.1"/>
    <property type="molecule type" value="Genomic_DNA"/>
</dbReference>
<dbReference type="RefSeq" id="WP_004661945.1">
    <property type="nucleotide sequence ID" value="NZ_VXJZ01000173.1"/>
</dbReference>
<dbReference type="SMR" id="Q7BS31"/>
<dbReference type="UniPathway" id="UPA00385"/>
<dbReference type="GO" id="GO:0102276">
    <property type="term" value="F:2-oxoglutarate oxygenase/decarboxylase (ethylene-forming) activity"/>
    <property type="evidence" value="ECO:0007669"/>
    <property type="project" value="UniProtKB-EC"/>
</dbReference>
<dbReference type="GO" id="GO:0051213">
    <property type="term" value="F:dioxygenase activity"/>
    <property type="evidence" value="ECO:0007669"/>
    <property type="project" value="UniProtKB-KW"/>
</dbReference>
<dbReference type="GO" id="GO:0046872">
    <property type="term" value="F:metal ion binding"/>
    <property type="evidence" value="ECO:0007669"/>
    <property type="project" value="UniProtKB-KW"/>
</dbReference>
<dbReference type="GO" id="GO:0009693">
    <property type="term" value="P:ethylene biosynthetic process"/>
    <property type="evidence" value="ECO:0007669"/>
    <property type="project" value="UniProtKB-UniPathway"/>
</dbReference>
<dbReference type="Gene3D" id="2.60.120.330">
    <property type="entry name" value="B-lactam Antibiotic, Isopenicillin N Synthase, Chain"/>
    <property type="match status" value="1"/>
</dbReference>
<dbReference type="InterPro" id="IPR026992">
    <property type="entry name" value="DIOX_N"/>
</dbReference>
<dbReference type="InterPro" id="IPR044861">
    <property type="entry name" value="IPNS-like_FE2OG_OXY"/>
</dbReference>
<dbReference type="InterPro" id="IPR027443">
    <property type="entry name" value="IPNS-like_sf"/>
</dbReference>
<dbReference type="InterPro" id="IPR050231">
    <property type="entry name" value="Iron_ascorbate_oxido_reductase"/>
</dbReference>
<dbReference type="InterPro" id="IPR005123">
    <property type="entry name" value="Oxoglu/Fe-dep_dioxygenase_dom"/>
</dbReference>
<dbReference type="PANTHER" id="PTHR47990">
    <property type="entry name" value="2-OXOGLUTARATE (2OG) AND FE(II)-DEPENDENT OXYGENASE SUPERFAMILY PROTEIN-RELATED"/>
    <property type="match status" value="1"/>
</dbReference>
<dbReference type="Pfam" id="PF03171">
    <property type="entry name" value="2OG-FeII_Oxy"/>
    <property type="match status" value="1"/>
</dbReference>
<dbReference type="Pfam" id="PF14226">
    <property type="entry name" value="DIOX_N"/>
    <property type="match status" value="1"/>
</dbReference>
<dbReference type="SUPFAM" id="SSF51197">
    <property type="entry name" value="Clavaminate synthase-like"/>
    <property type="match status" value="1"/>
</dbReference>
<dbReference type="PROSITE" id="PS51471">
    <property type="entry name" value="FE2OG_OXY"/>
    <property type="match status" value="1"/>
</dbReference>
<feature type="chain" id="PRO_0000067275" description="2-oxoglutarate-dependent ethylene/succinate-forming enzyme">
    <location>
        <begin position="1"/>
        <end position="350"/>
    </location>
</feature>
<feature type="domain" description="Fe2OG dioxygenase" evidence="2">
    <location>
        <begin position="166"/>
        <end position="286"/>
    </location>
</feature>
<feature type="binding site" evidence="2">
    <location>
        <position position="189"/>
    </location>
    <ligand>
        <name>Fe cation</name>
        <dbReference type="ChEBI" id="CHEBI:24875"/>
    </ligand>
</feature>
<feature type="binding site" evidence="2">
    <location>
        <position position="268"/>
    </location>
    <ligand>
        <name>Fe cation</name>
        <dbReference type="ChEBI" id="CHEBI:24875"/>
    </ligand>
</feature>
<gene>
    <name type="primary">efe</name>
</gene>
<sequence length="350" mass="39376">MTNLQTFELPTEVTGCAADISLGRALIQAWQKDGIFQIKTDSEQDRKTQEAMAASKQFCKEPLTFKSSCVSDLTYSGYVASGEEVTAGKPDFPEIFTVCKDLSVGDQRVKAGWPCHGPVPWPNNTYQKSMKTFMEELGLAGERLLKLTALGFELPINTFTDLTRDGWHHMRVLRFPPQTSTLSRGIGAHTDYGLLVIAAQDDVGGLYIRPPVEGEKRNRNWLPGESSAGMFEHDEPWTFVTPTPGVWTVFPGDILQFMTGGQLLSTPHKVKLNTRERFACAYFHEPNFEASAYPLFEPSANERIHYGEHFTNMFMRCYPDRITTQSINKENRLAHLEDLKKYSDTRATGS</sequence>
<name>EFE_PSECA</name>
<reference key="1">
    <citation type="journal article" date="1999" name="Phytopathology">
        <title>Comparison of ethylene production by Pseudomonas syringae and Ralstonia solanacearum.</title>
        <authorList>
            <person name="Weingart H."/>
            <person name="Voelksch B."/>
            <person name="Ullrich M.S."/>
        </authorList>
        <dbReference type="AGRICOLA" id="IND22019584"/>
    </citation>
    <scope>NUCLEOTIDE SEQUENCE [GENOMIC DNA]</scope>
    <source>
        <strain>GSPB 2553</strain>
    </source>
</reference>
<protein>
    <recommendedName>
        <fullName>2-oxoglutarate-dependent ethylene/succinate-forming enzyme</fullName>
        <shortName>EFE</shortName>
        <shortName>Ethylene-forming enzyme</shortName>
        <ecNumber>1.13.12.19</ecNumber>
        <ecNumber>1.14.20.7</ecNumber>
    </recommendedName>
    <alternativeName>
        <fullName>2-oxoglutarate dioxygenase (ethylene-forming)</fullName>
    </alternativeName>
    <alternativeName>
        <fullName>2-oxoglutarate/L-arginine monooxygenase/decarboxylase (succinate-forming)</fullName>
    </alternativeName>
</protein>
<organism>
    <name type="scientific">Pseudomonas cannabina</name>
    <dbReference type="NCBI Taxonomy" id="86840"/>
    <lineage>
        <taxon>Bacteria</taxon>
        <taxon>Pseudomonadati</taxon>
        <taxon>Pseudomonadota</taxon>
        <taxon>Gammaproteobacteria</taxon>
        <taxon>Pseudomonadales</taxon>
        <taxon>Pseudomonadaceae</taxon>
        <taxon>Pseudomonas</taxon>
    </lineage>
</organism>
<keyword id="KW-0223">Dioxygenase</keyword>
<keyword id="KW-0266">Ethylene biosynthesis</keyword>
<keyword id="KW-0408">Iron</keyword>
<keyword id="KW-0479">Metal-binding</keyword>
<keyword id="KW-0560">Oxidoreductase</keyword>
<keyword id="KW-0614">Plasmid</keyword>
<evidence type="ECO:0000250" key="1"/>
<evidence type="ECO:0000255" key="2">
    <source>
        <dbReference type="PROSITE-ProRule" id="PRU00805"/>
    </source>
</evidence>
<evidence type="ECO:0000305" key="3"/>
<evidence type="ECO:0000305" key="4">
    <source>
    </source>
</evidence>